<comment type="function">
    <text evidence="1">Binds the 23S rRNA.</text>
</comment>
<comment type="cofactor">
    <cofactor evidence="1">
        <name>Zn(2+)</name>
        <dbReference type="ChEBI" id="CHEBI:29105"/>
    </cofactor>
    <text evidence="1">Binds 1 zinc ion per subunit.</text>
</comment>
<comment type="subunit">
    <text evidence="1">Part of the 50S ribosomal subunit.</text>
</comment>
<comment type="similarity">
    <text evidence="1">Belongs to the bacterial ribosomal protein bL31 family. Type A subfamily.</text>
</comment>
<dbReference type="EMBL" id="CP000777">
    <property type="protein sequence ID" value="ABZ93526.1"/>
    <property type="molecule type" value="Genomic_DNA"/>
</dbReference>
<dbReference type="RefSeq" id="WP_012388038.1">
    <property type="nucleotide sequence ID" value="NC_010842.1"/>
</dbReference>
<dbReference type="SMR" id="B0SEI3"/>
<dbReference type="KEGG" id="lbf:LBF_0999"/>
<dbReference type="HOGENOM" id="CLU_114306_4_3_12"/>
<dbReference type="GO" id="GO:1990904">
    <property type="term" value="C:ribonucleoprotein complex"/>
    <property type="evidence" value="ECO:0007669"/>
    <property type="project" value="UniProtKB-KW"/>
</dbReference>
<dbReference type="GO" id="GO:0005840">
    <property type="term" value="C:ribosome"/>
    <property type="evidence" value="ECO:0007669"/>
    <property type="project" value="UniProtKB-KW"/>
</dbReference>
<dbReference type="GO" id="GO:0046872">
    <property type="term" value="F:metal ion binding"/>
    <property type="evidence" value="ECO:0007669"/>
    <property type="project" value="UniProtKB-KW"/>
</dbReference>
<dbReference type="GO" id="GO:0019843">
    <property type="term" value="F:rRNA binding"/>
    <property type="evidence" value="ECO:0007669"/>
    <property type="project" value="UniProtKB-KW"/>
</dbReference>
<dbReference type="GO" id="GO:0003735">
    <property type="term" value="F:structural constituent of ribosome"/>
    <property type="evidence" value="ECO:0007669"/>
    <property type="project" value="InterPro"/>
</dbReference>
<dbReference type="GO" id="GO:0006412">
    <property type="term" value="P:translation"/>
    <property type="evidence" value="ECO:0007669"/>
    <property type="project" value="UniProtKB-UniRule"/>
</dbReference>
<dbReference type="Gene3D" id="4.10.830.30">
    <property type="entry name" value="Ribosomal protein L31"/>
    <property type="match status" value="1"/>
</dbReference>
<dbReference type="HAMAP" id="MF_00501">
    <property type="entry name" value="Ribosomal_bL31_1"/>
    <property type="match status" value="1"/>
</dbReference>
<dbReference type="InterPro" id="IPR034704">
    <property type="entry name" value="Ribosomal_bL28/bL31-like_sf"/>
</dbReference>
<dbReference type="InterPro" id="IPR002150">
    <property type="entry name" value="Ribosomal_bL31"/>
</dbReference>
<dbReference type="InterPro" id="IPR027491">
    <property type="entry name" value="Ribosomal_bL31_A"/>
</dbReference>
<dbReference type="InterPro" id="IPR042105">
    <property type="entry name" value="Ribosomal_bL31_sf"/>
</dbReference>
<dbReference type="NCBIfam" id="TIGR00105">
    <property type="entry name" value="L31"/>
    <property type="match status" value="1"/>
</dbReference>
<dbReference type="NCBIfam" id="NF000612">
    <property type="entry name" value="PRK00019.1"/>
    <property type="match status" value="1"/>
</dbReference>
<dbReference type="NCBIfam" id="NF001809">
    <property type="entry name" value="PRK00528.1"/>
    <property type="match status" value="1"/>
</dbReference>
<dbReference type="PANTHER" id="PTHR33280">
    <property type="entry name" value="50S RIBOSOMAL PROTEIN L31, CHLOROPLASTIC"/>
    <property type="match status" value="1"/>
</dbReference>
<dbReference type="PANTHER" id="PTHR33280:SF1">
    <property type="entry name" value="LARGE RIBOSOMAL SUBUNIT PROTEIN BL31C"/>
    <property type="match status" value="1"/>
</dbReference>
<dbReference type="Pfam" id="PF01197">
    <property type="entry name" value="Ribosomal_L31"/>
    <property type="match status" value="1"/>
</dbReference>
<dbReference type="PRINTS" id="PR01249">
    <property type="entry name" value="RIBOSOMALL31"/>
</dbReference>
<dbReference type="SUPFAM" id="SSF143800">
    <property type="entry name" value="L28p-like"/>
    <property type="match status" value="1"/>
</dbReference>
<dbReference type="PROSITE" id="PS01143">
    <property type="entry name" value="RIBOSOMAL_L31"/>
    <property type="match status" value="1"/>
</dbReference>
<sequence length="66" mass="7372">MKTDIHPKYVAAKIKCACGTVIETRSTSGDISVEICSNCHPFFTGKSKLVDTTGRVDKFKKKYKMK</sequence>
<name>RL31_LEPBA</name>
<organism>
    <name type="scientific">Leptospira biflexa serovar Patoc (strain Patoc 1 / Ames)</name>
    <dbReference type="NCBI Taxonomy" id="355278"/>
    <lineage>
        <taxon>Bacteria</taxon>
        <taxon>Pseudomonadati</taxon>
        <taxon>Spirochaetota</taxon>
        <taxon>Spirochaetia</taxon>
        <taxon>Leptospirales</taxon>
        <taxon>Leptospiraceae</taxon>
        <taxon>Leptospira</taxon>
    </lineage>
</organism>
<gene>
    <name evidence="1" type="primary">rpmE</name>
    <name type="ordered locus">LBF_0999</name>
</gene>
<accession>B0SEI3</accession>
<reference key="1">
    <citation type="journal article" date="2008" name="PLoS ONE">
        <title>Genome sequence of the saprophyte Leptospira biflexa provides insights into the evolution of Leptospira and the pathogenesis of leptospirosis.</title>
        <authorList>
            <person name="Picardeau M."/>
            <person name="Bulach D.M."/>
            <person name="Bouchier C."/>
            <person name="Zuerner R.L."/>
            <person name="Zidane N."/>
            <person name="Wilson P.J."/>
            <person name="Creno S."/>
            <person name="Kuczek E.S."/>
            <person name="Bommezzadri S."/>
            <person name="Davis J.C."/>
            <person name="McGrath A."/>
            <person name="Johnson M.J."/>
            <person name="Boursaux-Eude C."/>
            <person name="Seemann T."/>
            <person name="Rouy Z."/>
            <person name="Coppel R.L."/>
            <person name="Rood J.I."/>
            <person name="Lajus A."/>
            <person name="Davies J.K."/>
            <person name="Medigue C."/>
            <person name="Adler B."/>
        </authorList>
    </citation>
    <scope>NUCLEOTIDE SEQUENCE [LARGE SCALE GENOMIC DNA]</scope>
    <source>
        <strain>Patoc 1 / Ames</strain>
    </source>
</reference>
<feature type="chain" id="PRO_1000126650" description="Large ribosomal subunit protein bL31">
    <location>
        <begin position="1"/>
        <end position="66"/>
    </location>
</feature>
<feature type="binding site" evidence="1">
    <location>
        <position position="16"/>
    </location>
    <ligand>
        <name>Zn(2+)</name>
        <dbReference type="ChEBI" id="CHEBI:29105"/>
    </ligand>
</feature>
<feature type="binding site" evidence="1">
    <location>
        <position position="18"/>
    </location>
    <ligand>
        <name>Zn(2+)</name>
        <dbReference type="ChEBI" id="CHEBI:29105"/>
    </ligand>
</feature>
<feature type="binding site" evidence="1">
    <location>
        <position position="36"/>
    </location>
    <ligand>
        <name>Zn(2+)</name>
        <dbReference type="ChEBI" id="CHEBI:29105"/>
    </ligand>
</feature>
<feature type="binding site" evidence="1">
    <location>
        <position position="39"/>
    </location>
    <ligand>
        <name>Zn(2+)</name>
        <dbReference type="ChEBI" id="CHEBI:29105"/>
    </ligand>
</feature>
<evidence type="ECO:0000255" key="1">
    <source>
        <dbReference type="HAMAP-Rule" id="MF_00501"/>
    </source>
</evidence>
<evidence type="ECO:0000305" key="2"/>
<keyword id="KW-0479">Metal-binding</keyword>
<keyword id="KW-0687">Ribonucleoprotein</keyword>
<keyword id="KW-0689">Ribosomal protein</keyword>
<keyword id="KW-0694">RNA-binding</keyword>
<keyword id="KW-0699">rRNA-binding</keyword>
<keyword id="KW-0862">Zinc</keyword>
<proteinExistence type="inferred from homology"/>
<protein>
    <recommendedName>
        <fullName evidence="1">Large ribosomal subunit protein bL31</fullName>
    </recommendedName>
    <alternativeName>
        <fullName evidence="2">50S ribosomal protein L31</fullName>
    </alternativeName>
</protein>